<feature type="chain" id="PRO_0000385393" description="Putative transmembrane protein 10">
    <location>
        <begin position="1"/>
        <end position="129"/>
    </location>
</feature>
<feature type="transmembrane region" description="Helical" evidence="1">
    <location>
        <begin position="3"/>
        <end position="23"/>
    </location>
</feature>
<feature type="transmembrane region" description="Helical" evidence="1">
    <location>
        <begin position="27"/>
        <end position="47"/>
    </location>
</feature>
<feature type="transmembrane region" description="Helical" evidence="1">
    <location>
        <begin position="85"/>
        <end position="105"/>
    </location>
</feature>
<gene>
    <name type="primary">SIFV0010</name>
</gene>
<name>Y010_SIFVH</name>
<protein>
    <recommendedName>
        <fullName>Putative transmembrane protein 10</fullName>
    </recommendedName>
</protein>
<dbReference type="EMBL" id="AF440571">
    <property type="protein sequence ID" value="AAL27721.1"/>
    <property type="molecule type" value="Genomic_DNA"/>
</dbReference>
<dbReference type="RefSeq" id="NP_445675.1">
    <property type="nucleotide sequence ID" value="NC_003214.2"/>
</dbReference>
<dbReference type="GeneID" id="922316"/>
<dbReference type="KEGG" id="vg:922316"/>
<dbReference type="Proteomes" id="UP000007017">
    <property type="component" value="Segment"/>
</dbReference>
<dbReference type="GO" id="GO:0033644">
    <property type="term" value="C:host cell membrane"/>
    <property type="evidence" value="ECO:0007669"/>
    <property type="project" value="UniProtKB-SubCell"/>
</dbReference>
<dbReference type="GO" id="GO:0016020">
    <property type="term" value="C:membrane"/>
    <property type="evidence" value="ECO:0007669"/>
    <property type="project" value="UniProtKB-KW"/>
</dbReference>
<evidence type="ECO:0000255" key="1"/>
<evidence type="ECO:0000305" key="2"/>
<keyword id="KW-1043">Host membrane</keyword>
<keyword id="KW-0472">Membrane</keyword>
<keyword id="KW-1185">Reference proteome</keyword>
<keyword id="KW-0812">Transmembrane</keyword>
<keyword id="KW-1133">Transmembrane helix</keyword>
<reference key="1">
    <citation type="journal article" date="2000" name="Virology">
        <title>A novel lipothrixvirus, SIFV, of the extremely thermophilic crenarchaeon Sulfolobus.</title>
        <authorList>
            <person name="Arnold H.P."/>
            <person name="Zillig W."/>
            <person name="Ziese U."/>
            <person name="Holz I."/>
            <person name="Crosby M."/>
            <person name="Utterback T."/>
            <person name="Weidmann J.F."/>
            <person name="Umayam L.A."/>
            <person name="Teffera K."/>
            <person name="Kristjanson J.K."/>
            <person name="Klenk H.P."/>
            <person name="Nelson K.E."/>
            <person name="Fraser C.M."/>
        </authorList>
    </citation>
    <scope>NUCLEOTIDE SEQUENCE [GENOMIC DNA]</scope>
</reference>
<organism>
    <name type="scientific">Sulfolobus islandicus filamentous virus (isolate Iceland/Hveragerdi)</name>
    <name type="common">SIFV</name>
    <dbReference type="NCBI Taxonomy" id="654908"/>
    <lineage>
        <taxon>Viruses</taxon>
        <taxon>Adnaviria</taxon>
        <taxon>Zilligvirae</taxon>
        <taxon>Taleaviricota</taxon>
        <taxon>Tokiviricetes</taxon>
        <taxon>Ligamenvirales</taxon>
        <taxon>Lipothrixviridae</taxon>
        <taxon>Betalipothrixvirus</taxon>
        <taxon>Sulfolobus islandicus filamentous virus</taxon>
    </lineage>
</organism>
<proteinExistence type="predicted"/>
<accession>Q914M0</accession>
<comment type="subcellular location">
    <subcellularLocation>
        <location evidence="2">Host membrane</location>
        <topology evidence="2">Multi-pass membrane protein</topology>
    </subcellularLocation>
</comment>
<sequence length="129" mass="14139">MNNFSYFSTIFSIALMSSNAFAGNDTLLVGFCPCIEINTLTLFLSSLYAIKPSDSCSPSYTSNLLNLFCDFVNSSTHLSISVFSSSVLSCFTSCFVIYFYPFFVFDSASYCVFNSSSREGCTSVTIGWG</sequence>
<organismHost>
    <name type="scientific">Saccharolobus islandicus</name>
    <name type="common">Sulfolobus islandicus</name>
    <dbReference type="NCBI Taxonomy" id="43080"/>
</organismHost>